<name>TM86B_HUMAN</name>
<sequence>MDAGKAGQTLKTHCSAQRPDVCRWLSPFILSCCVYFCLWIPEDQLSWFAALVKCLPVLCLAGFLWVMSPSGGYTQLLQGALVCSAVGDACLIWPAAFVPGMAAFATAHLLYVWAFGFSPLQPGLLLLIILAPGPYLSLVLQHLEPDMVLPVAAYGLILMAMLWRGLAQGGSAGWGALLFTLSDGVLAWDTFAQPLPHAHLVIMTTYYAAQLLITLSALRSPVPKTD</sequence>
<evidence type="ECO:0000250" key="1">
    <source>
        <dbReference type="UniProtKB" id="Q9D8N3"/>
    </source>
</evidence>
<evidence type="ECO:0000255" key="2"/>
<evidence type="ECO:0000269" key="3">
    <source>
    </source>
</evidence>
<evidence type="ECO:0000269" key="4">
    <source>
    </source>
</evidence>
<evidence type="ECO:0000305" key="5"/>
<reference key="1">
    <citation type="journal article" date="2004" name="Nature">
        <title>The DNA sequence and biology of human chromosome 19.</title>
        <authorList>
            <person name="Grimwood J."/>
            <person name="Gordon L.A."/>
            <person name="Olsen A.S."/>
            <person name="Terry A."/>
            <person name="Schmutz J."/>
            <person name="Lamerdin J.E."/>
            <person name="Hellsten U."/>
            <person name="Goodstein D."/>
            <person name="Couronne O."/>
            <person name="Tran-Gyamfi M."/>
            <person name="Aerts A."/>
            <person name="Altherr M."/>
            <person name="Ashworth L."/>
            <person name="Bajorek E."/>
            <person name="Black S."/>
            <person name="Branscomb E."/>
            <person name="Caenepeel S."/>
            <person name="Carrano A.V."/>
            <person name="Caoile C."/>
            <person name="Chan Y.M."/>
            <person name="Christensen M."/>
            <person name="Cleland C.A."/>
            <person name="Copeland A."/>
            <person name="Dalin E."/>
            <person name="Dehal P."/>
            <person name="Denys M."/>
            <person name="Detter J.C."/>
            <person name="Escobar J."/>
            <person name="Flowers D."/>
            <person name="Fotopulos D."/>
            <person name="Garcia C."/>
            <person name="Georgescu A.M."/>
            <person name="Glavina T."/>
            <person name="Gomez M."/>
            <person name="Gonzales E."/>
            <person name="Groza M."/>
            <person name="Hammon N."/>
            <person name="Hawkins T."/>
            <person name="Haydu L."/>
            <person name="Ho I."/>
            <person name="Huang W."/>
            <person name="Israni S."/>
            <person name="Jett J."/>
            <person name="Kadner K."/>
            <person name="Kimball H."/>
            <person name="Kobayashi A."/>
            <person name="Larionov V."/>
            <person name="Leem S.-H."/>
            <person name="Lopez F."/>
            <person name="Lou Y."/>
            <person name="Lowry S."/>
            <person name="Malfatti S."/>
            <person name="Martinez D."/>
            <person name="McCready P.M."/>
            <person name="Medina C."/>
            <person name="Morgan J."/>
            <person name="Nelson K."/>
            <person name="Nolan M."/>
            <person name="Ovcharenko I."/>
            <person name="Pitluck S."/>
            <person name="Pollard M."/>
            <person name="Popkie A.P."/>
            <person name="Predki P."/>
            <person name="Quan G."/>
            <person name="Ramirez L."/>
            <person name="Rash S."/>
            <person name="Retterer J."/>
            <person name="Rodriguez A."/>
            <person name="Rogers S."/>
            <person name="Salamov A."/>
            <person name="Salazar A."/>
            <person name="She X."/>
            <person name="Smith D."/>
            <person name="Slezak T."/>
            <person name="Solovyev V."/>
            <person name="Thayer N."/>
            <person name="Tice H."/>
            <person name="Tsai M."/>
            <person name="Ustaszewska A."/>
            <person name="Vo N."/>
            <person name="Wagner M."/>
            <person name="Wheeler J."/>
            <person name="Wu K."/>
            <person name="Xie G."/>
            <person name="Yang J."/>
            <person name="Dubchak I."/>
            <person name="Furey T.S."/>
            <person name="DeJong P."/>
            <person name="Dickson M."/>
            <person name="Gordon D."/>
            <person name="Eichler E.E."/>
            <person name="Pennacchio L.A."/>
            <person name="Richardson P."/>
            <person name="Stubbs L."/>
            <person name="Rokhsar D.S."/>
            <person name="Myers R.M."/>
            <person name="Rubin E.M."/>
            <person name="Lucas S.M."/>
        </authorList>
    </citation>
    <scope>NUCLEOTIDE SEQUENCE [LARGE SCALE GENOMIC DNA]</scope>
</reference>
<reference key="2">
    <citation type="journal article" date="2004" name="Genome Res.">
        <title>The status, quality, and expansion of the NIH full-length cDNA project: the Mammalian Gene Collection (MGC).</title>
        <authorList>
            <consortium name="The MGC Project Team"/>
        </authorList>
    </citation>
    <scope>NUCLEOTIDE SEQUENCE [LARGE SCALE MRNA]</scope>
    <scope>VARIANT ARG-199</scope>
    <source>
        <tissue>Placenta</tissue>
    </source>
</reference>
<reference key="3">
    <citation type="journal article" date="2011" name="J. Biol. Chem.">
        <title>Purification, identification, and cloning of lysoplasmalogenase, the enzyme that catalyzes hydrolysis of the vinyl ether bond of lysoplasmalogen.</title>
        <authorList>
            <person name="Wu L.C."/>
            <person name="Pfeiffer D.R."/>
            <person name="Calhoon E.A."/>
            <person name="Madiai F."/>
            <person name="Marcucci G."/>
            <person name="Liu S."/>
            <person name="Jurkowitz M.S."/>
        </authorList>
    </citation>
    <scope>FUNCTION</scope>
    <scope>CATALYTIC ACTIVITY</scope>
    <scope>BIOPHYSICOCHEMICAL PROPERTIES</scope>
    <scope>ACTIVITY REGULATION</scope>
    <scope>SUBUNIT</scope>
    <scope>SUBCELLULAR LOCATION</scope>
</reference>
<feature type="chain" id="PRO_0000201841" description="Lysoplasmalogenase TMEM86B">
    <location>
        <begin position="1"/>
        <end position="226"/>
    </location>
</feature>
<feature type="topological domain" description="Cytoplasmic" evidence="5">
    <location>
        <begin position="1"/>
        <end position="23"/>
    </location>
</feature>
<feature type="transmembrane region" description="Helical" evidence="2">
    <location>
        <begin position="24"/>
        <end position="40"/>
    </location>
</feature>
<feature type="topological domain" description="Extracellular" evidence="5">
    <location>
        <begin position="41"/>
        <end position="46"/>
    </location>
</feature>
<feature type="transmembrane region" description="Helical" evidence="2">
    <location>
        <begin position="47"/>
        <end position="67"/>
    </location>
</feature>
<feature type="topological domain" description="Cytoplasmic" evidence="5">
    <location>
        <begin position="68"/>
        <end position="75"/>
    </location>
</feature>
<feature type="transmembrane region" description="Helical" evidence="2">
    <location>
        <begin position="76"/>
        <end position="93"/>
    </location>
</feature>
<feature type="topological domain" description="Extracellular" evidence="5">
    <location>
        <begin position="94"/>
        <end position="100"/>
    </location>
</feature>
<feature type="transmembrane region" description="Helical" evidence="2">
    <location>
        <begin position="101"/>
        <end position="117"/>
    </location>
</feature>
<feature type="topological domain" description="Cytoplasmic" evidence="5">
    <location>
        <begin position="118"/>
        <end position="123"/>
    </location>
</feature>
<feature type="transmembrane region" description="Helical" evidence="2">
    <location>
        <begin position="124"/>
        <end position="140"/>
    </location>
</feature>
<feature type="topological domain" description="Extracellular" evidence="5">
    <location>
        <begin position="141"/>
        <end position="146"/>
    </location>
</feature>
<feature type="transmembrane region" description="Helical" evidence="2">
    <location>
        <begin position="147"/>
        <end position="163"/>
    </location>
</feature>
<feature type="topological domain" description="Cytoplasmic" evidence="5">
    <location>
        <begin position="164"/>
        <end position="171"/>
    </location>
</feature>
<feature type="transmembrane region" description="Helical" evidence="2">
    <location>
        <begin position="172"/>
        <end position="188"/>
    </location>
</feature>
<feature type="topological domain" description="Extracellular" evidence="5">
    <location>
        <begin position="189"/>
        <end position="199"/>
    </location>
</feature>
<feature type="transmembrane region" description="Helical" evidence="2">
    <location>
        <begin position="200"/>
        <end position="218"/>
    </location>
</feature>
<feature type="topological domain" description="Cytoplasmic" evidence="5">
    <location>
        <begin position="219"/>
        <end position="226"/>
    </location>
</feature>
<feature type="sequence variant" id="VAR_052343" description="In dbSNP:rs35608872.">
    <original>A</original>
    <variation>T</variation>
    <location>
        <position position="176"/>
    </location>
</feature>
<feature type="sequence variant" id="VAR_052344" description="In dbSNP:rs4644955." evidence="3">
    <original>H</original>
    <variation>R</variation>
    <location>
        <position position="199"/>
    </location>
</feature>
<dbReference type="EC" id="3.3.2.2" evidence="4"/>
<dbReference type="EMBL" id="AC010327">
    <property type="status" value="NOT_ANNOTATED_CDS"/>
    <property type="molecule type" value="Genomic_DNA"/>
</dbReference>
<dbReference type="EMBL" id="BC023000">
    <property type="protein sequence ID" value="AAH23000.1"/>
    <property type="molecule type" value="mRNA"/>
</dbReference>
<dbReference type="CCDS" id="CCDS12920.1"/>
<dbReference type="RefSeq" id="NP_776165.3">
    <property type="nucleotide sequence ID" value="NM_173804.4"/>
</dbReference>
<dbReference type="BioGRID" id="129071">
    <property type="interactions" value="107"/>
</dbReference>
<dbReference type="FunCoup" id="Q8N661">
    <property type="interactions" value="75"/>
</dbReference>
<dbReference type="IntAct" id="Q8N661">
    <property type="interactions" value="104"/>
</dbReference>
<dbReference type="STRING" id="9606.ENSP00000321038"/>
<dbReference type="SwissLipids" id="SLP:000000632"/>
<dbReference type="PhosphoSitePlus" id="Q8N661"/>
<dbReference type="BioMuta" id="TMEM86B"/>
<dbReference type="DMDM" id="296452936"/>
<dbReference type="MassIVE" id="Q8N661"/>
<dbReference type="PaxDb" id="9606-ENSP00000321038"/>
<dbReference type="PeptideAtlas" id="Q8N661"/>
<dbReference type="ProteomicsDB" id="72134"/>
<dbReference type="Antibodypedia" id="33044">
    <property type="antibodies" value="15 antibodies from 8 providers"/>
</dbReference>
<dbReference type="DNASU" id="255043"/>
<dbReference type="Ensembl" id="ENST00000327042.5">
    <property type="protein sequence ID" value="ENSP00000321038.3"/>
    <property type="gene ID" value="ENSG00000180089.6"/>
</dbReference>
<dbReference type="GeneID" id="255043"/>
<dbReference type="KEGG" id="hsa:255043"/>
<dbReference type="MANE-Select" id="ENST00000327042.5">
    <property type="protein sequence ID" value="ENSP00000321038.3"/>
    <property type="RefSeq nucleotide sequence ID" value="NM_173804.5"/>
    <property type="RefSeq protein sequence ID" value="NP_776165.3"/>
</dbReference>
<dbReference type="UCSC" id="uc002qju.4">
    <property type="organism name" value="human"/>
</dbReference>
<dbReference type="AGR" id="HGNC:28448"/>
<dbReference type="CTD" id="255043"/>
<dbReference type="GeneCards" id="TMEM86B"/>
<dbReference type="HGNC" id="HGNC:28448">
    <property type="gene designation" value="TMEM86B"/>
</dbReference>
<dbReference type="HPA" id="ENSG00000180089">
    <property type="expression patterns" value="Tissue enhanced (gallbladder, liver)"/>
</dbReference>
<dbReference type="MIM" id="617806">
    <property type="type" value="gene"/>
</dbReference>
<dbReference type="neXtProt" id="NX_Q8N661"/>
<dbReference type="OpenTargets" id="ENSG00000180089"/>
<dbReference type="PharmGKB" id="PA142670738"/>
<dbReference type="VEuPathDB" id="HostDB:ENSG00000180089"/>
<dbReference type="eggNOG" id="KOG4804">
    <property type="taxonomic scope" value="Eukaryota"/>
</dbReference>
<dbReference type="GeneTree" id="ENSGT00390000007101"/>
<dbReference type="HOGENOM" id="CLU_079086_1_0_1"/>
<dbReference type="InParanoid" id="Q8N661"/>
<dbReference type="OMA" id="ACLIWPA"/>
<dbReference type="OrthoDB" id="2133758at2759"/>
<dbReference type="PAN-GO" id="Q8N661">
    <property type="GO annotations" value="2 GO annotations based on evolutionary models"/>
</dbReference>
<dbReference type="PhylomeDB" id="Q8N661"/>
<dbReference type="TreeFam" id="TF324663"/>
<dbReference type="BioCyc" id="MetaCyc:ENSG00000180089-MONOMER"/>
<dbReference type="PathwayCommons" id="Q8N661"/>
<dbReference type="Reactome" id="R-HSA-1482788">
    <property type="pathway name" value="Acyl chain remodelling of PC"/>
</dbReference>
<dbReference type="SignaLink" id="Q8N661"/>
<dbReference type="BioGRID-ORCS" id="255043">
    <property type="hits" value="10 hits in 1160 CRISPR screens"/>
</dbReference>
<dbReference type="GenomeRNAi" id="255043"/>
<dbReference type="Pharos" id="Q8N661">
    <property type="development level" value="Tbio"/>
</dbReference>
<dbReference type="PRO" id="PR:Q8N661"/>
<dbReference type="Proteomes" id="UP000005640">
    <property type="component" value="Chromosome 19"/>
</dbReference>
<dbReference type="RNAct" id="Q8N661">
    <property type="molecule type" value="protein"/>
</dbReference>
<dbReference type="Bgee" id="ENSG00000180089">
    <property type="expression patterns" value="Expressed in right lobe of liver and 91 other cell types or tissues"/>
</dbReference>
<dbReference type="GO" id="GO:0005737">
    <property type="term" value="C:cytoplasm"/>
    <property type="evidence" value="ECO:0000314"/>
    <property type="project" value="UniProtKB"/>
</dbReference>
<dbReference type="GO" id="GO:0005789">
    <property type="term" value="C:endoplasmic reticulum membrane"/>
    <property type="evidence" value="ECO:0000250"/>
    <property type="project" value="UniProtKB"/>
</dbReference>
<dbReference type="GO" id="GO:0016020">
    <property type="term" value="C:membrane"/>
    <property type="evidence" value="ECO:0000314"/>
    <property type="project" value="UniProtKB"/>
</dbReference>
<dbReference type="GO" id="GO:0047408">
    <property type="term" value="F:alkenylglycerophosphocholine hydrolase activity"/>
    <property type="evidence" value="ECO:0000314"/>
    <property type="project" value="UniProtKB"/>
</dbReference>
<dbReference type="GO" id="GO:0047826">
    <property type="term" value="F:D-lysine 5,6-aminomutase activity"/>
    <property type="evidence" value="ECO:0000314"/>
    <property type="project" value="UniProtKB"/>
</dbReference>
<dbReference type="GO" id="GO:0016803">
    <property type="term" value="F:ether hydrolase activity"/>
    <property type="evidence" value="ECO:0000304"/>
    <property type="project" value="Reactome"/>
</dbReference>
<dbReference type="GO" id="GO:0042802">
    <property type="term" value="F:identical protein binding"/>
    <property type="evidence" value="ECO:0000353"/>
    <property type="project" value="IntAct"/>
</dbReference>
<dbReference type="GO" id="GO:0046485">
    <property type="term" value="P:ether lipid metabolic process"/>
    <property type="evidence" value="ECO:0000314"/>
    <property type="project" value="UniProtKB"/>
</dbReference>
<dbReference type="GO" id="GO:0036151">
    <property type="term" value="P:phosphatidylcholine acyl-chain remodeling"/>
    <property type="evidence" value="ECO:0000304"/>
    <property type="project" value="Reactome"/>
</dbReference>
<dbReference type="InterPro" id="IPR012506">
    <property type="entry name" value="TMEM86B-like"/>
</dbReference>
<dbReference type="PANTHER" id="PTHR31885">
    <property type="entry name" value="GH04784P"/>
    <property type="match status" value="1"/>
</dbReference>
<dbReference type="PANTHER" id="PTHR31885:SF7">
    <property type="entry name" value="LYSOPLASMALOGENASE"/>
    <property type="match status" value="1"/>
</dbReference>
<dbReference type="Pfam" id="PF07947">
    <property type="entry name" value="YhhN"/>
    <property type="match status" value="1"/>
</dbReference>
<keyword id="KW-0963">Cytoplasm</keyword>
<keyword id="KW-0256">Endoplasmic reticulum</keyword>
<keyword id="KW-0378">Hydrolase</keyword>
<keyword id="KW-0443">Lipid metabolism</keyword>
<keyword id="KW-0472">Membrane</keyword>
<keyword id="KW-1267">Proteomics identification</keyword>
<keyword id="KW-1185">Reference proteome</keyword>
<keyword id="KW-0812">Transmembrane</keyword>
<keyword id="KW-1133">Transmembrane helix</keyword>
<proteinExistence type="evidence at protein level"/>
<protein>
    <recommendedName>
        <fullName>Lysoplasmalogenase TMEM86B</fullName>
        <ecNumber evidence="4">3.3.2.2</ecNumber>
    </recommendedName>
    <alternativeName>
        <fullName>Transmembrane protein 86B</fullName>
    </alternativeName>
</protein>
<accession>Q8N661</accession>
<organism>
    <name type="scientific">Homo sapiens</name>
    <name type="common">Human</name>
    <dbReference type="NCBI Taxonomy" id="9606"/>
    <lineage>
        <taxon>Eukaryota</taxon>
        <taxon>Metazoa</taxon>
        <taxon>Chordata</taxon>
        <taxon>Craniata</taxon>
        <taxon>Vertebrata</taxon>
        <taxon>Euteleostomi</taxon>
        <taxon>Mammalia</taxon>
        <taxon>Eutheria</taxon>
        <taxon>Euarchontoglires</taxon>
        <taxon>Primates</taxon>
        <taxon>Haplorrhini</taxon>
        <taxon>Catarrhini</taxon>
        <taxon>Hominidae</taxon>
        <taxon>Homo</taxon>
    </lineage>
</organism>
<comment type="function">
    <text evidence="4">Catalyzes the hydrolysis of the vinyl ether bond of choline or ethanolamine lysoplasmalogens, forming fatty aldehyde and glycerophosphocholine or glycerophosphoethanolamine, respectively and is specific for the sn-2-deacylated (lyso) form of plasmalogen.</text>
</comment>
<comment type="catalytic activity">
    <reaction evidence="4">
        <text>a 1-O-(1Z-alkenyl)-sn-glycero-3-phosphocholine + H2O = a 2,3-saturated aldehyde + sn-glycerol 3-phosphocholine</text>
        <dbReference type="Rhea" id="RHEA:22544"/>
        <dbReference type="ChEBI" id="CHEBI:15377"/>
        <dbReference type="ChEBI" id="CHEBI:16870"/>
        <dbReference type="ChEBI" id="CHEBI:73359"/>
        <dbReference type="ChEBI" id="CHEBI:77287"/>
        <dbReference type="EC" id="3.3.2.2"/>
    </reaction>
</comment>
<comment type="catalytic activity">
    <reaction evidence="4">
        <text>a 1-O-(1Z-alkenyl)-sn-glycero-3-phosphoethanolamine + H2O = a 2,3-saturated aldehyde + sn-glycero-3-phosphoethanolamine</text>
        <dbReference type="Rhea" id="RHEA:16905"/>
        <dbReference type="ChEBI" id="CHEBI:15377"/>
        <dbReference type="ChEBI" id="CHEBI:73359"/>
        <dbReference type="ChEBI" id="CHEBI:77288"/>
        <dbReference type="ChEBI" id="CHEBI:143890"/>
        <dbReference type="EC" id="3.3.2.2"/>
    </reaction>
</comment>
<comment type="activity regulation">
    <text evidence="4">Competitively inhibited by lysophosphatidic acid.</text>
</comment>
<comment type="biophysicochemical properties">
    <kinetics>
        <KM evidence="4">45 uM for lysoplasmenyl-choline</KM>
        <KM evidence="4">53 uM for lysoplasmenyl-ethanolamine</KM>
    </kinetics>
    <phDependence>
        <text evidence="4">Optimum pH is 6.95 and 7.05 with lysoplasmenyl-ethanolamine and lysoplasmenyl-choline as substrates, respectively.</text>
    </phDependence>
</comment>
<comment type="subunit">
    <text evidence="5">Homodimer.</text>
</comment>
<comment type="interaction">
    <interactant intactId="EBI-2548832">
        <id>Q8N661</id>
    </interactant>
    <interactant intactId="EBI-13059134">
        <id>Q13520</id>
        <label>AQP6</label>
    </interactant>
    <organismsDiffer>false</organismsDiffer>
    <experiments>3</experiments>
</comment>
<comment type="interaction">
    <interactant intactId="EBI-2548832">
        <id>Q8N661</id>
    </interactant>
    <interactant intactId="EBI-11343438">
        <id>Q3SXY8</id>
        <label>ARL13B</label>
    </interactant>
    <organismsDiffer>false</organismsDiffer>
    <experiments>3</experiments>
</comment>
<comment type="interaction">
    <interactant intactId="EBI-2548832">
        <id>Q8N661</id>
    </interactant>
    <interactant intactId="EBI-2808844">
        <id>Q8N6S5</id>
        <label>ARL6IP6</label>
    </interactant>
    <organismsDiffer>false</organismsDiffer>
    <experiments>3</experiments>
</comment>
<comment type="interaction">
    <interactant intactId="EBI-2548832">
        <id>Q8N661</id>
    </interactant>
    <interactant intactId="EBI-12808270">
        <id>P07307-3</id>
        <label>ASGR2</label>
    </interactant>
    <organismsDiffer>false</organismsDiffer>
    <experiments>3</experiments>
</comment>
<comment type="interaction">
    <interactant intactId="EBI-2548832">
        <id>Q8N661</id>
    </interactant>
    <interactant intactId="EBI-747430">
        <id>Q9BXK5</id>
        <label>BCL2L13</label>
    </interactant>
    <organismsDiffer>false</organismsDiffer>
    <experiments>6</experiments>
</comment>
<comment type="interaction">
    <interactant intactId="EBI-2548832">
        <id>Q8N661</id>
    </interactant>
    <interactant intactId="EBI-700794">
        <id>Q13323</id>
        <label>BIK</label>
    </interactant>
    <organismsDiffer>false</organismsDiffer>
    <experiments>3</experiments>
</comment>
<comment type="interaction">
    <interactant intactId="EBI-2548832">
        <id>Q8N661</id>
    </interactant>
    <interactant intactId="EBI-3922513">
        <id>O95393</id>
        <label>BMP10</label>
    </interactant>
    <organismsDiffer>false</organismsDiffer>
    <experiments>3</experiments>
</comment>
<comment type="interaction">
    <interactant intactId="EBI-2548832">
        <id>Q8N661</id>
    </interactant>
    <interactant intactId="EBI-12822627">
        <id>O14523</id>
        <label>C2CD2L</label>
    </interactant>
    <organismsDiffer>false</organismsDiffer>
    <experiments>3</experiments>
</comment>
<comment type="interaction">
    <interactant intactId="EBI-2548832">
        <id>Q8N661</id>
    </interactant>
    <interactant intactId="EBI-9083477">
        <id>Q9P0B6</id>
        <label>CCDC167</label>
    </interactant>
    <organismsDiffer>false</organismsDiffer>
    <experiments>3</experiments>
</comment>
<comment type="interaction">
    <interactant intactId="EBI-2548832">
        <id>Q8N661</id>
    </interactant>
    <interactant intactId="EBI-17641690">
        <id>Q96HJ3-2</id>
        <label>CCDC34</label>
    </interactant>
    <organismsDiffer>false</organismsDiffer>
    <experiments>3</experiments>
</comment>
<comment type="interaction">
    <interactant intactId="EBI-2548832">
        <id>Q8N661</id>
    </interactant>
    <interactant intactId="EBI-2873970">
        <id>P13236</id>
        <label>CCL4</label>
    </interactant>
    <organismsDiffer>false</organismsDiffer>
    <experiments>3</experiments>
</comment>
<comment type="interaction">
    <interactant intactId="EBI-2548832">
        <id>Q8N661</id>
    </interactant>
    <interactant intactId="EBI-6657396">
        <id>P19397</id>
        <label>CD53</label>
    </interactant>
    <organismsDiffer>false</organismsDiffer>
    <experiments>3</experiments>
</comment>
<comment type="interaction">
    <interactant intactId="EBI-2548832">
        <id>Q8N661</id>
    </interactant>
    <interactant intactId="EBI-7797864">
        <id>P11912</id>
        <label>CD79A</label>
    </interactant>
    <organismsDiffer>false</organismsDiffer>
    <experiments>3</experiments>
</comment>
<comment type="interaction">
    <interactant intactId="EBI-2548832">
        <id>Q8N661</id>
    </interactant>
    <interactant intactId="EBI-17274839">
        <id>P58418</id>
        <label>CLRN1</label>
    </interactant>
    <organismsDiffer>false</organismsDiffer>
    <experiments>3</experiments>
</comment>
<comment type="interaction">
    <interactant intactId="EBI-2548832">
        <id>Q8N661</id>
    </interactant>
    <interactant intactId="EBI-1058710">
        <id>O43169</id>
        <label>CYB5B</label>
    </interactant>
    <organismsDiffer>false</organismsDiffer>
    <experiments>3</experiments>
</comment>
<comment type="interaction">
    <interactant intactId="EBI-2548832">
        <id>Q8N661</id>
    </interactant>
    <interactant intactId="EBI-3923585">
        <id>Q8N5I4</id>
        <label>DHRSX</label>
    </interactant>
    <organismsDiffer>false</organismsDiffer>
    <experiments>3</experiments>
</comment>
<comment type="interaction">
    <interactant intactId="EBI-2548832">
        <id>Q8N661</id>
    </interactant>
    <interactant intactId="EBI-8639143">
        <id>Q96LL9</id>
        <label>DNAJC30</label>
    </interactant>
    <organismsDiffer>false</organismsDiffer>
    <experiments>3</experiments>
</comment>
<comment type="interaction">
    <interactant intactId="EBI-2548832">
        <id>Q8N661</id>
    </interactant>
    <interactant intactId="EBI-3915253">
        <id>Q15125</id>
        <label>EBP</label>
    </interactant>
    <organismsDiffer>false</organismsDiffer>
    <experiments>3</experiments>
</comment>
<comment type="interaction">
    <interactant intactId="EBI-2548832">
        <id>Q8N661</id>
    </interactant>
    <interactant intactId="EBI-781551">
        <id>Q9Y282</id>
        <label>ERGIC3</label>
    </interactant>
    <organismsDiffer>false</organismsDiffer>
    <experiments>3</experiments>
</comment>
<comment type="interaction">
    <interactant intactId="EBI-2548832">
        <id>Q8N661</id>
    </interactant>
    <interactant intactId="EBI-946830">
        <id>P30040</id>
        <label>ERP29</label>
    </interactant>
    <organismsDiffer>false</organismsDiffer>
    <experiments>3</experiments>
</comment>
<comment type="interaction">
    <interactant intactId="EBI-2548832">
        <id>Q8N661</id>
    </interactant>
    <interactant intactId="EBI-17640610">
        <id>P34910-2</id>
        <label>EVI2B</label>
    </interactant>
    <organismsDiffer>false</organismsDiffer>
    <experiments>3</experiments>
</comment>
<comment type="interaction">
    <interactant intactId="EBI-2548832">
        <id>Q8N661</id>
    </interactant>
    <interactant intactId="EBI-742600">
        <id>Q9Y624</id>
        <label>F11R</label>
    </interactant>
    <organismsDiffer>false</organismsDiffer>
    <experiments>3</experiments>
</comment>
<comment type="interaction">
    <interactant intactId="EBI-2548832">
        <id>Q8N661</id>
    </interactant>
    <interactant intactId="EBI-18304435">
        <id>Q5JX71</id>
        <label>FAM209A</label>
    </interactant>
    <organismsDiffer>false</organismsDiffer>
    <experiments>3</experiments>
</comment>
<comment type="interaction">
    <interactant intactId="EBI-2548832">
        <id>Q8N661</id>
    </interactant>
    <interactant intactId="EBI-12142299">
        <id>Q96IV6</id>
        <label>FAXDC2</label>
    </interactant>
    <organismsDiffer>false</organismsDiffer>
    <experiments>3</experiments>
</comment>
<comment type="interaction">
    <interactant intactId="EBI-2548832">
        <id>Q8N661</id>
    </interactant>
    <interactant intactId="EBI-3918971">
        <id>Q9Y680</id>
        <label>FKBP7</label>
    </interactant>
    <organismsDiffer>false</organismsDiffer>
    <experiments>3</experiments>
</comment>
<comment type="interaction">
    <interactant intactId="EBI-2548832">
        <id>Q8N661</id>
    </interactant>
    <interactant intactId="EBI-713304">
        <id>Q9H0Q3</id>
        <label>FXYD6</label>
    </interactant>
    <organismsDiffer>false</organismsDiffer>
    <experiments>3</experiments>
</comment>
<comment type="interaction">
    <interactant intactId="EBI-2548832">
        <id>Q8N661</id>
    </interactant>
    <interactant intactId="EBI-1103439">
        <id>P17302</id>
        <label>GJA1</label>
    </interactant>
    <organismsDiffer>false</organismsDiffer>
    <experiments>3</experiments>
</comment>
<comment type="interaction">
    <interactant intactId="EBI-2548832">
        <id>Q8N661</id>
    </interactant>
    <interactant intactId="EBI-6918707">
        <id>P35212</id>
        <label>GJA4</label>
    </interactant>
    <organismsDiffer>false</organismsDiffer>
    <experiments>3</experiments>
</comment>
<comment type="interaction">
    <interactant intactId="EBI-2548832">
        <id>Q8N661</id>
    </interactant>
    <interactant intactId="EBI-17458373">
        <id>P48165</id>
        <label>GJA8</label>
    </interactant>
    <organismsDiffer>false</organismsDiffer>
    <experiments>3</experiments>
</comment>
<comment type="interaction">
    <interactant intactId="EBI-2548832">
        <id>Q8N661</id>
    </interactant>
    <interactant intactId="EBI-712073">
        <id>Q8NBJ4</id>
        <label>GOLM1</label>
    </interactant>
    <organismsDiffer>false</organismsDiffer>
    <experiments>3</experiments>
</comment>
<comment type="interaction">
    <interactant intactId="EBI-2548832">
        <id>Q8N661</id>
    </interactant>
    <interactant intactId="EBI-2927498">
        <id>O60883</id>
        <label>GPR37L1</label>
    </interactant>
    <organismsDiffer>false</organismsDiffer>
    <experiments>3</experiments>
</comment>
<comment type="interaction">
    <interactant intactId="EBI-2548832">
        <id>Q8N661</id>
    </interactant>
    <interactant intactId="EBI-11721746">
        <id>Q8TED1</id>
        <label>GPX8</label>
    </interactant>
    <organismsDiffer>false</organismsDiffer>
    <experiments>3</experiments>
</comment>
<comment type="interaction">
    <interactant intactId="EBI-2548832">
        <id>Q8N661</id>
    </interactant>
    <interactant intactId="EBI-12244272">
        <id>Q02747</id>
        <label>GUCA2A</label>
    </interactant>
    <organismsDiffer>false</organismsDiffer>
    <experiments>3</experiments>
</comment>
<comment type="interaction">
    <interactant intactId="EBI-2548832">
        <id>Q8N661</id>
    </interactant>
    <interactant intactId="EBI-11427100">
        <id>P31937</id>
        <label>HIBADH</label>
    </interactant>
    <organismsDiffer>false</organismsDiffer>
    <experiments>3</experiments>
</comment>
<comment type="interaction">
    <interactant intactId="EBI-2548832">
        <id>Q8N661</id>
    </interactant>
    <interactant intactId="EBI-18053395">
        <id>Q7Z5P4</id>
        <label>HSD17B13</label>
    </interactant>
    <organismsDiffer>false</organismsDiffer>
    <experiments>3</experiments>
</comment>
<comment type="interaction">
    <interactant intactId="EBI-2548832">
        <id>Q8N661</id>
    </interactant>
    <interactant intactId="EBI-725665">
        <id>Q9Y5U9</id>
        <label>IER3IP1</label>
    </interactant>
    <organismsDiffer>false</organismsDiffer>
    <experiments>3</experiments>
</comment>
<comment type="interaction">
    <interactant intactId="EBI-2548832">
        <id>Q8N661</id>
    </interactant>
    <interactant intactId="EBI-7932862">
        <id>Q01628</id>
        <label>IFITM3</label>
    </interactant>
    <organismsDiffer>false</organismsDiffer>
    <experiments>3</experiments>
</comment>
<comment type="interaction">
    <interactant intactId="EBI-2548832">
        <id>Q8N661</id>
    </interactant>
    <interactant intactId="EBI-8632435">
        <id>P43628</id>
        <label>KIR2DL3</label>
    </interactant>
    <organismsDiffer>false</organismsDiffer>
    <experiments>3</experiments>
</comment>
<comment type="interaction">
    <interactant intactId="EBI-2548832">
        <id>Q8N661</id>
    </interactant>
    <interactant intactId="EBI-3267258">
        <id>Q86VI4</id>
        <label>LAPTM4B</label>
    </interactant>
    <organismsDiffer>false</organismsDiffer>
    <experiments>3</experiments>
</comment>
<comment type="interaction">
    <interactant intactId="EBI-2548832">
        <id>Q8N661</id>
    </interactant>
    <interactant intactId="EBI-2830566">
        <id>Q9H400</id>
        <label>LIME1</label>
    </interactant>
    <organismsDiffer>false</organismsDiffer>
    <experiments>3</experiments>
</comment>
<comment type="interaction">
    <interactant intactId="EBI-2548832">
        <id>Q8N661</id>
    </interactant>
    <interactant intactId="EBI-3930711">
        <id>P48449</id>
        <label>LSS</label>
    </interactant>
    <organismsDiffer>false</organismsDiffer>
    <experiments>3</experiments>
</comment>
<comment type="interaction">
    <interactant intactId="EBI-2548832">
        <id>Q8N661</id>
    </interactant>
    <interactant intactId="EBI-1965225">
        <id>Q14210</id>
        <label>LY6D</label>
    </interactant>
    <organismsDiffer>false</organismsDiffer>
    <experiments>3</experiments>
</comment>
<comment type="interaction">
    <interactant intactId="EBI-2548832">
        <id>Q8N661</id>
    </interactant>
    <interactant intactId="EBI-10317612">
        <id>Q9P0N8</id>
        <label>MARCHF2</label>
    </interactant>
    <organismsDiffer>false</organismsDiffer>
    <experiments>3</experiments>
</comment>
<comment type="interaction">
    <interactant intactId="EBI-2548832">
        <id>Q8N661</id>
    </interactant>
    <interactant intactId="EBI-11956541">
        <id>Q9GZY8-5</id>
        <label>MFF</label>
    </interactant>
    <organismsDiffer>false</organismsDiffer>
    <experiments>6</experiments>
</comment>
<comment type="interaction">
    <interactant intactId="EBI-2548832">
        <id>Q8N661</id>
    </interactant>
    <interactant intactId="EBI-724754">
        <id>O14880</id>
        <label>MGST3</label>
    </interactant>
    <organismsDiffer>false</organismsDiffer>
    <experiments>3</experiments>
</comment>
<comment type="interaction">
    <interactant intactId="EBI-2548832">
        <id>Q8N661</id>
    </interactant>
    <interactant intactId="EBI-6163737">
        <id>Q8N4V1</id>
        <label>MMGT1</label>
    </interactant>
    <organismsDiffer>false</organismsDiffer>
    <experiments>3</experiments>
</comment>
<comment type="interaction">
    <interactant intactId="EBI-2548832">
        <id>Q8N661</id>
    </interactant>
    <interactant intactId="EBI-12839612">
        <id>Q96JA4</id>
        <label>MS4A14</label>
    </interactant>
    <organismsDiffer>false</organismsDiffer>
    <experiments>3</experiments>
</comment>
<comment type="interaction">
    <interactant intactId="EBI-2548832">
        <id>Q8N661</id>
    </interactant>
    <interactant intactId="EBI-949102">
        <id>Q15800</id>
        <label>MSMO1</label>
    </interactant>
    <organismsDiffer>false</organismsDiffer>
    <experiments>3</experiments>
</comment>
<comment type="interaction">
    <interactant intactId="EBI-2548832">
        <id>Q8N661</id>
    </interactant>
    <interactant intactId="EBI-17263240">
        <id>P15941-11</id>
        <label>MUC1</label>
    </interactant>
    <organismsDiffer>false</organismsDiffer>
    <experiments>3</experiments>
</comment>
<comment type="interaction">
    <interactant intactId="EBI-2548832">
        <id>Q8N661</id>
    </interactant>
    <interactant intactId="EBI-741874">
        <id>Q9Y375</id>
        <label>NDUFAF1</label>
    </interactant>
    <organismsDiffer>false</organismsDiffer>
    <experiments>3</experiments>
</comment>
<comment type="interaction">
    <interactant intactId="EBI-2548832">
        <id>Q8N661</id>
    </interactant>
    <interactant intactId="EBI-10969203">
        <id>O14524-2</id>
        <label>NEMP1</label>
    </interactant>
    <organismsDiffer>false</organismsDiffer>
    <experiments>3</experiments>
</comment>
<comment type="interaction">
    <interactant intactId="EBI-2548832">
        <id>Q8N661</id>
    </interactant>
    <interactant intactId="EBI-10317425">
        <id>Q9NZG7</id>
        <label>NINJ2</label>
    </interactant>
    <organismsDiffer>false</organismsDiffer>
    <experiments>3</experiments>
</comment>
<comment type="interaction">
    <interactant intactId="EBI-2548832">
        <id>Q8N661</id>
    </interactant>
    <interactant intactId="EBI-11075081">
        <id>Q53FV1</id>
        <label>ORMDL2</label>
    </interactant>
    <organismsDiffer>false</organismsDiffer>
    <experiments>3</experiments>
</comment>
<comment type="interaction">
    <interactant intactId="EBI-2548832">
        <id>Q8N661</id>
    </interactant>
    <interactant intactId="EBI-6916492">
        <id>Q9NUU6</id>
        <label>OTULINL</label>
    </interactant>
    <organismsDiffer>false</organismsDiffer>
    <experiments>3</experiments>
</comment>
<comment type="interaction">
    <interactant intactId="EBI-2548832">
        <id>Q8N661</id>
    </interactant>
    <interactant intactId="EBI-17284886">
        <id>Q96HA9</id>
        <label>PEX11G</label>
    </interactant>
    <organismsDiffer>false</organismsDiffer>
    <experiments>3</experiments>
</comment>
<comment type="interaction">
    <interactant intactId="EBI-2548832">
        <id>Q8N661</id>
    </interactant>
    <interactant intactId="EBI-1050125">
        <id>O15173</id>
        <label>PGRMC2</label>
    </interactant>
    <organismsDiffer>false</organismsDiffer>
    <experiments>3</experiments>
</comment>
<comment type="interaction">
    <interactant intactId="EBI-2548832">
        <id>Q8N661</id>
    </interactant>
    <interactant intactId="EBI-17180304">
        <id>Q07326</id>
        <label>PIGF</label>
    </interactant>
    <organismsDiffer>false</organismsDiffer>
    <experiments>3</experiments>
</comment>
<comment type="interaction">
    <interactant intactId="EBI-2548832">
        <id>Q8N661</id>
    </interactant>
    <interactant intactId="EBI-692836">
        <id>P26678</id>
        <label>PLN</label>
    </interactant>
    <organismsDiffer>false</organismsDiffer>
    <experiments>3</experiments>
</comment>
<comment type="interaction">
    <interactant intactId="EBI-2548832">
        <id>Q8N661</id>
    </interactant>
    <interactant intactId="EBI-968788">
        <id>P18031</id>
        <label>PTPN1</label>
    </interactant>
    <organismsDiffer>false</organismsDiffer>
    <experiments>3</experiments>
</comment>
<comment type="interaction">
    <interactant intactId="EBI-2548832">
        <id>Q8N661</id>
    </interactant>
    <interactant intactId="EBI-742898">
        <id>P43378</id>
        <label>PTPN9</label>
    </interactant>
    <organismsDiffer>false</organismsDiffer>
    <experiments>3</experiments>
</comment>
<comment type="interaction">
    <interactant intactId="EBI-2548832">
        <id>Q8N661</id>
    </interactant>
    <interactant intactId="EBI-9916444">
        <id>Q8TEB9</id>
        <label>RHBDD1</label>
    </interactant>
    <organismsDiffer>false</organismsDiffer>
    <experiments>3</experiments>
</comment>
<comment type="interaction">
    <interactant intactId="EBI-2548832">
        <id>Q8N661</id>
    </interactant>
    <interactant intactId="EBI-1396563">
        <id>Q8IXI1</id>
        <label>RHOT2</label>
    </interactant>
    <organismsDiffer>false</organismsDiffer>
    <experiments>3</experiments>
</comment>
<comment type="interaction">
    <interactant intactId="EBI-2548832">
        <id>Q8N661</id>
    </interactant>
    <interactant intactId="EBI-1052363">
        <id>Q9NS64</id>
        <label>RPRM</label>
    </interactant>
    <organismsDiffer>false</organismsDiffer>
    <experiments>3</experiments>
</comment>
<comment type="interaction">
    <interactant intactId="EBI-2548832">
        <id>Q8N661</id>
    </interactant>
    <interactant intactId="EBI-10244780">
        <id>Q5QGT7</id>
        <label>RTP2</label>
    </interactant>
    <organismsDiffer>false</organismsDiffer>
    <experiments>3</experiments>
</comment>
<comment type="interaction">
    <interactant intactId="EBI-2548832">
        <id>Q8N661</id>
    </interactant>
    <interactant intactId="EBI-1058865">
        <id>O75396</id>
        <label>SEC22B</label>
    </interactant>
    <organismsDiffer>false</organismsDiffer>
    <experiments>3</experiments>
</comment>
<comment type="interaction">
    <interactant intactId="EBI-2548832">
        <id>Q8N661</id>
    </interactant>
    <interactant intactId="EBI-3940687">
        <id>Q8N474</id>
        <label>SFRP1</label>
    </interactant>
    <organismsDiffer>false</organismsDiffer>
    <experiments>3</experiments>
</comment>
<comment type="interaction">
    <interactant intactId="EBI-2548832">
        <id>Q8N661</id>
    </interactant>
    <interactant intactId="EBI-2854842">
        <id>Q8WV19</id>
        <label>SFT2D1</label>
    </interactant>
    <organismsDiffer>false</organismsDiffer>
    <experiments>3</experiments>
</comment>
<comment type="interaction">
    <interactant intactId="EBI-2548832">
        <id>Q8N661</id>
    </interactant>
    <interactant intactId="EBI-17274136">
        <id>Q8TD22</id>
        <label>SFXN5</label>
    </interactant>
    <organismsDiffer>false</organismsDiffer>
    <experiments>3</experiments>
</comment>
<comment type="interaction">
    <interactant intactId="EBI-2548832">
        <id>Q8N661</id>
    </interactant>
    <interactant intactId="EBI-18159983">
        <id>Q3KNW5</id>
        <label>SLC10A6</label>
    </interactant>
    <organismsDiffer>false</organismsDiffer>
    <experiments>3</experiments>
</comment>
<comment type="interaction">
    <interactant intactId="EBI-2548832">
        <id>Q8N661</id>
    </interactant>
    <interactant intactId="EBI-727304">
        <id>Q8TBE7</id>
        <label>SLC35G2</label>
    </interactant>
    <organismsDiffer>false</organismsDiffer>
    <experiments>3</experiments>
</comment>
<comment type="interaction">
    <interactant intactId="EBI-2548832">
        <id>Q8N661</id>
    </interactant>
    <interactant intactId="EBI-2823239">
        <id>Q9NUM3</id>
        <label>SLC39A9</label>
    </interactant>
    <organismsDiffer>false</organismsDiffer>
    <experiments>3</experiments>
</comment>
<comment type="interaction">
    <interactant intactId="EBI-2548832">
        <id>Q8N661</id>
    </interactant>
    <interactant intactId="EBI-12188413">
        <id>B2RUZ4</id>
        <label>SMIM1</label>
    </interactant>
    <organismsDiffer>false</organismsDiffer>
    <experiments>3</experiments>
</comment>
<comment type="interaction">
    <interactant intactId="EBI-2548832">
        <id>Q8N661</id>
    </interactant>
    <interactant intactId="EBI-11957067">
        <id>Q6UX34</id>
        <label>SNORC</label>
    </interactant>
    <organismsDiffer>false</organismsDiffer>
    <experiments>3</experiments>
</comment>
<comment type="interaction">
    <interactant intactId="EBI-2548832">
        <id>Q8N661</id>
    </interactant>
    <interactant intactId="EBI-17280858">
        <id>Q8WWF3</id>
        <label>SSMEM1</label>
    </interactant>
    <organismsDiffer>false</organismsDiffer>
    <experiments>3</experiments>
</comment>
<comment type="interaction">
    <interactant intactId="EBI-2548832">
        <id>Q8N661</id>
    </interactant>
    <interactant intactId="EBI-1211440">
        <id>P27105</id>
        <label>STOM</label>
    </interactant>
    <organismsDiffer>false</organismsDiffer>
    <experiments>3</experiments>
</comment>
<comment type="interaction">
    <interactant intactId="EBI-2548832">
        <id>Q8N661</id>
    </interactant>
    <interactant intactId="EBI-2691717">
        <id>Q86Y82</id>
        <label>STX12</label>
    </interactant>
    <organismsDiffer>false</organismsDiffer>
    <experiments>3</experiments>
</comment>
<comment type="interaction">
    <interactant intactId="EBI-2548832">
        <id>Q8N661</id>
    </interactant>
    <interactant intactId="EBI-2695795">
        <id>O43752</id>
        <label>STX6</label>
    </interactant>
    <organismsDiffer>false</organismsDiffer>
    <experiments>3</experiments>
</comment>
<comment type="interaction">
    <interactant intactId="EBI-2548832">
        <id>Q8N661</id>
    </interactant>
    <interactant intactId="EBI-727240">
        <id>Q9UNK0</id>
        <label>STX8</label>
    </interactant>
    <organismsDiffer>false</organismsDiffer>
    <experiments>3</experiments>
</comment>
<comment type="interaction">
    <interactant intactId="EBI-2548832">
        <id>Q8N661</id>
    </interactant>
    <interactant intactId="EBI-19027521">
        <id>Q8N6K0</id>
        <label>TEX29</label>
    </interactant>
    <organismsDiffer>false</organismsDiffer>
    <experiments>3</experiments>
</comment>
<comment type="interaction">
    <interactant intactId="EBI-2548832">
        <id>Q8N661</id>
    </interactant>
    <interactant intactId="EBI-726691">
        <id>Q8WY91</id>
        <label>THAP4</label>
    </interactant>
    <organismsDiffer>false</organismsDiffer>
    <experiments>3</experiments>
</comment>
<comment type="interaction">
    <interactant intactId="EBI-2548832">
        <id>Q8N661</id>
    </interactant>
    <interactant intactId="EBI-941422">
        <id>P07204</id>
        <label>THBD</label>
    </interactant>
    <organismsDiffer>false</organismsDiffer>
    <experiments>3</experiments>
</comment>
<comment type="interaction">
    <interactant intactId="EBI-2548832">
        <id>Q8N661</id>
    </interactant>
    <interactant intactId="EBI-1047996">
        <id>O14925</id>
        <label>TIMM23</label>
    </interactant>
    <organismsDiffer>false</organismsDiffer>
    <experiments>3</experiments>
</comment>
<comment type="interaction">
    <interactant intactId="EBI-2548832">
        <id>Q8N661</id>
    </interactant>
    <interactant intactId="EBI-3915978">
        <id>Q96A25</id>
        <label>TMEM106A</label>
    </interactant>
    <organismsDiffer>false</organismsDiffer>
    <experiments>3</experiments>
</comment>
<comment type="interaction">
    <interactant intactId="EBI-2548832">
        <id>Q8N661</id>
    </interactant>
    <interactant intactId="EBI-12845616">
        <id>Q6UX40</id>
        <label>TMEM107</label>
    </interactant>
    <organismsDiffer>false</organismsDiffer>
    <experiments>3</experiments>
</comment>
<comment type="interaction">
    <interactant intactId="EBI-2548832">
        <id>Q8N661</id>
    </interactant>
    <interactant intactId="EBI-727322">
        <id>Q9BXJ8</id>
        <label>TMEM120A</label>
    </interactant>
    <organismsDiffer>false</organismsDiffer>
    <experiments>3</experiments>
</comment>
<comment type="interaction">
    <interactant intactId="EBI-2548832">
        <id>Q8N661</id>
    </interactant>
    <interactant intactId="EBI-2800360">
        <id>Q9Y6G1</id>
        <label>TMEM14A</label>
    </interactant>
    <organismsDiffer>false</organismsDiffer>
    <experiments>3</experiments>
</comment>
<comment type="interaction">
    <interactant intactId="EBI-2548832">
        <id>Q8N661</id>
    </interactant>
    <interactant intactId="EBI-2339195">
        <id>Q9P0S9</id>
        <label>TMEM14C</label>
    </interactant>
    <organismsDiffer>false</organismsDiffer>
    <experiments>3</experiments>
</comment>
<comment type="interaction">
    <interactant intactId="EBI-2548832">
        <id>Q8N661</id>
    </interactant>
    <interactant intactId="EBI-12274070">
        <id>Q969S6</id>
        <label>TMEM203</label>
    </interactant>
    <organismsDiffer>false</organismsDiffer>
    <experiments>3</experiments>
</comment>
<comment type="interaction">
    <interactant intactId="EBI-2548832">
        <id>Q8N661</id>
    </interactant>
    <interactant intactId="EBI-10982110">
        <id>Q96Q45-2</id>
        <label>TMEM237</label>
    </interactant>
    <organismsDiffer>false</organismsDiffer>
    <experiments>5</experiments>
</comment>
<comment type="interaction">
    <interactant intactId="EBI-2548832">
        <id>Q8N661</id>
    </interactant>
    <interactant intactId="EBI-10314986">
        <id>Q9NWD8</id>
        <label>TMEM248</label>
    </interactant>
    <organismsDiffer>false</organismsDiffer>
    <experiments>3</experiments>
</comment>
<comment type="interaction">
    <interactant intactId="EBI-2548832">
        <id>Q8N661</id>
    </interactant>
    <interactant intactId="EBI-18178701">
        <id>Q4KMG9</id>
        <label>TMEM52B</label>
    </interactant>
    <organismsDiffer>false</organismsDiffer>
    <experiments>3</experiments>
</comment>
<comment type="interaction">
    <interactant intactId="EBI-2548832">
        <id>Q8N661</id>
    </interactant>
    <interactant intactId="EBI-2852148">
        <id>Q9H2L4</id>
        <label>TMEM60</label>
    </interactant>
    <organismsDiffer>false</organismsDiffer>
    <experiments>3</experiments>
</comment>
<comment type="interaction">
    <interactant intactId="EBI-2548832">
        <id>Q8N661</id>
    </interactant>
    <interactant intactId="EBI-2548832">
        <id>Q8N661</id>
        <label>TMEM86B</label>
    </interactant>
    <organismsDiffer>false</organismsDiffer>
    <experiments>3</experiments>
</comment>
<comment type="interaction">
    <interactant intactId="EBI-2548832">
        <id>Q8N661</id>
    </interactant>
    <interactant intactId="EBI-12345267">
        <id>O15393-2</id>
        <label>TMPRSS2</label>
    </interactant>
    <organismsDiffer>false</organismsDiffer>
    <experiments>3</experiments>
</comment>
<comment type="interaction">
    <interactant intactId="EBI-2548832">
        <id>Q8N661</id>
    </interactant>
    <interactant intactId="EBI-6447886">
        <id>Q9Y320</id>
        <label>TMX2</label>
    </interactant>
    <organismsDiffer>false</organismsDiffer>
    <experiments>3</experiments>
</comment>
<comment type="interaction">
    <interactant intactId="EBI-2548832">
        <id>Q8N661</id>
    </interactant>
    <interactant intactId="EBI-16746122">
        <id>Q9NSU2-1</id>
        <label>TREX1</label>
    </interactant>
    <organismsDiffer>false</organismsDiffer>
    <experiments>3</experiments>
</comment>
<comment type="interaction">
    <interactant intactId="EBI-2548832">
        <id>Q8N661</id>
    </interactant>
    <interactant intactId="EBI-12003468">
        <id>A0AVG3</id>
        <label>TSNARE1</label>
    </interactant>
    <organismsDiffer>false</organismsDiffer>
    <experiments>3</experiments>
</comment>
<comment type="interaction">
    <interactant intactId="EBI-2548832">
        <id>Q8N661</id>
    </interactant>
    <interactant intactId="EBI-742842">
        <id>Q9NZ43</id>
        <label>USE1</label>
    </interactant>
    <organismsDiffer>false</organismsDiffer>
    <experiments>3</experiments>
</comment>
<comment type="interaction">
    <interactant intactId="EBI-2548832">
        <id>Q8N661</id>
    </interactant>
    <interactant intactId="EBI-520113">
        <id>P63027</id>
        <label>VAMP2</label>
    </interactant>
    <organismsDiffer>false</organismsDiffer>
    <experiments>3</experiments>
</comment>
<comment type="interaction">
    <interactant intactId="EBI-2548832">
        <id>Q8N661</id>
    </interactant>
    <interactant intactId="EBI-722343">
        <id>Q15836</id>
        <label>VAMP3</label>
    </interactant>
    <organismsDiffer>false</organismsDiffer>
    <experiments>3</experiments>
</comment>
<comment type="interaction">
    <interactant intactId="EBI-2548832">
        <id>Q8N661</id>
    </interactant>
    <interactant intactId="EBI-10191195">
        <id>O95183</id>
        <label>VAMP5</label>
    </interactant>
    <organismsDiffer>false</organismsDiffer>
    <experiments>3</experiments>
</comment>
<comment type="interaction">
    <interactant intactId="EBI-2548832">
        <id>Q8N661</id>
    </interactant>
    <interactant intactId="EBI-1059156">
        <id>Q9P0L0</id>
        <label>VAPA</label>
    </interactant>
    <organismsDiffer>false</organismsDiffer>
    <experiments>3</experiments>
</comment>
<comment type="interaction">
    <interactant intactId="EBI-2548832">
        <id>Q8N661</id>
    </interactant>
    <interactant intactId="EBI-10268111">
        <id>Q8N966</id>
        <label>ZDHHC22</label>
    </interactant>
    <organismsDiffer>false</organismsDiffer>
    <experiments>3</experiments>
</comment>
<comment type="interaction">
    <interactant intactId="EBI-2548832">
        <id>Q8N661</id>
    </interactant>
    <interactant intactId="EBI-2857623">
        <id>Q96FB2</id>
    </interactant>
    <organismsDiffer>false</organismsDiffer>
    <experiments>3</experiments>
</comment>
<comment type="subcellular location">
    <subcellularLocation>
        <location evidence="1">Endoplasmic reticulum membrane</location>
        <topology evidence="2">Multi-pass membrane protein</topology>
    </subcellularLocation>
    <subcellularLocation>
        <location evidence="4">Cytoplasm</location>
    </subcellularLocation>
</comment>
<comment type="similarity">
    <text evidence="5">Belongs to the TMEM86 family.</text>
</comment>
<gene>
    <name type="primary">TMEM86B</name>
</gene>